<organism>
    <name type="scientific">Rattus norvegicus</name>
    <name type="common">Rat</name>
    <dbReference type="NCBI Taxonomy" id="10116"/>
    <lineage>
        <taxon>Eukaryota</taxon>
        <taxon>Metazoa</taxon>
        <taxon>Chordata</taxon>
        <taxon>Craniata</taxon>
        <taxon>Vertebrata</taxon>
        <taxon>Euteleostomi</taxon>
        <taxon>Mammalia</taxon>
        <taxon>Eutheria</taxon>
        <taxon>Euarchontoglires</taxon>
        <taxon>Glires</taxon>
        <taxon>Rodentia</taxon>
        <taxon>Myomorpha</taxon>
        <taxon>Muroidea</taxon>
        <taxon>Muridae</taxon>
        <taxon>Murinae</taxon>
        <taxon>Rattus</taxon>
    </lineage>
</organism>
<protein>
    <recommendedName>
        <fullName>Metal transporter CNNM2</fullName>
    </recommendedName>
    <alternativeName>
        <fullName>Ancient conserved domain-containing protein 2</fullName>
    </alternativeName>
    <alternativeName>
        <fullName>Cyclin-M2</fullName>
    </alternativeName>
</protein>
<reference key="1">
    <citation type="journal article" date="2004" name="Genome Res.">
        <title>The status, quality, and expansion of the NIH full-length cDNA project: the Mammalian Gene Collection (MGC).</title>
        <authorList>
            <consortium name="The MGC Project Team"/>
        </authorList>
    </citation>
    <scope>NUCLEOTIDE SEQUENCE [LARGE SCALE MRNA]</scope>
    <source>
        <tissue>Kidney</tissue>
    </source>
</reference>
<keyword id="KW-0129">CBS domain</keyword>
<keyword id="KW-1003">Cell membrane</keyword>
<keyword id="KW-0325">Glycoprotein</keyword>
<keyword id="KW-0406">Ion transport</keyword>
<keyword id="KW-0472">Membrane</keyword>
<keyword id="KW-0597">Phosphoprotein</keyword>
<keyword id="KW-1185">Reference proteome</keyword>
<keyword id="KW-0677">Repeat</keyword>
<keyword id="KW-0812">Transmembrane</keyword>
<keyword id="KW-1133">Transmembrane helix</keyword>
<keyword id="KW-0813">Transport</keyword>
<dbReference type="EMBL" id="BC085930">
    <property type="protein sequence ID" value="AAH85930.1"/>
    <property type="molecule type" value="mRNA"/>
</dbReference>
<dbReference type="RefSeq" id="NP_001011942.1">
    <property type="nucleotide sequence ID" value="NM_001011942.1"/>
</dbReference>
<dbReference type="SMR" id="Q5U2P1"/>
<dbReference type="FunCoup" id="Q5U2P1">
    <property type="interactions" value="617"/>
</dbReference>
<dbReference type="STRING" id="10116.ENSRNOP00000051583"/>
<dbReference type="GlyCosmos" id="Q5U2P1">
    <property type="glycosylation" value="1 site, No reported glycans"/>
</dbReference>
<dbReference type="GlyGen" id="Q5U2P1">
    <property type="glycosylation" value="1 site"/>
</dbReference>
<dbReference type="iPTMnet" id="Q5U2P1"/>
<dbReference type="PhosphoSitePlus" id="Q5U2P1"/>
<dbReference type="jPOST" id="Q5U2P1"/>
<dbReference type="PaxDb" id="10116-ENSRNOP00000051583"/>
<dbReference type="Ensembl" id="ENSRNOT00000054699.3">
    <property type="protein sequence ID" value="ENSRNOP00000051583.2"/>
    <property type="gene ID" value="ENSRNOG00000020113.7"/>
</dbReference>
<dbReference type="GeneID" id="294014"/>
<dbReference type="KEGG" id="rno:294014"/>
<dbReference type="UCSC" id="RGD:1308162">
    <property type="organism name" value="rat"/>
</dbReference>
<dbReference type="AGR" id="RGD:1308162"/>
<dbReference type="CTD" id="54805"/>
<dbReference type="RGD" id="1308162">
    <property type="gene designation" value="Cnnm2"/>
</dbReference>
<dbReference type="eggNOG" id="KOG2118">
    <property type="taxonomic scope" value="Eukaryota"/>
</dbReference>
<dbReference type="GeneTree" id="ENSGT00940000159034"/>
<dbReference type="HOGENOM" id="CLU_011310_1_1_1"/>
<dbReference type="InParanoid" id="Q5U2P1"/>
<dbReference type="OMA" id="MLEHYLF"/>
<dbReference type="OrthoDB" id="5353557at2759"/>
<dbReference type="PhylomeDB" id="Q5U2P1"/>
<dbReference type="TreeFam" id="TF101012"/>
<dbReference type="PRO" id="PR:Q5U2P1"/>
<dbReference type="Proteomes" id="UP000002494">
    <property type="component" value="Chromosome 1"/>
</dbReference>
<dbReference type="Bgee" id="ENSRNOG00000020113">
    <property type="expression patterns" value="Expressed in kidney and 19 other cell types or tissues"/>
</dbReference>
<dbReference type="GO" id="GO:0016323">
    <property type="term" value="C:basolateral plasma membrane"/>
    <property type="evidence" value="ECO:0000266"/>
    <property type="project" value="RGD"/>
</dbReference>
<dbReference type="GO" id="GO:0098978">
    <property type="term" value="C:glutamatergic synapse"/>
    <property type="evidence" value="ECO:0000266"/>
    <property type="project" value="RGD"/>
</dbReference>
<dbReference type="GO" id="GO:0005886">
    <property type="term" value="C:plasma membrane"/>
    <property type="evidence" value="ECO:0000266"/>
    <property type="project" value="RGD"/>
</dbReference>
<dbReference type="GO" id="GO:0045202">
    <property type="term" value="C:synapse"/>
    <property type="evidence" value="ECO:0000266"/>
    <property type="project" value="RGD"/>
</dbReference>
<dbReference type="GO" id="GO:0005524">
    <property type="term" value="F:ATP binding"/>
    <property type="evidence" value="ECO:0000266"/>
    <property type="project" value="RGD"/>
</dbReference>
<dbReference type="GO" id="GO:0015095">
    <property type="term" value="F:magnesium ion transmembrane transporter activity"/>
    <property type="evidence" value="ECO:0000266"/>
    <property type="project" value="RGD"/>
</dbReference>
<dbReference type="GO" id="GO:0010960">
    <property type="term" value="P:magnesium ion homeostasis"/>
    <property type="evidence" value="ECO:0000266"/>
    <property type="project" value="RGD"/>
</dbReference>
<dbReference type="GO" id="GO:0015693">
    <property type="term" value="P:magnesium ion transport"/>
    <property type="evidence" value="ECO:0000266"/>
    <property type="project" value="RGD"/>
</dbReference>
<dbReference type="CDD" id="cd04590">
    <property type="entry name" value="CBS_pair_CorC_HlyC_assoc"/>
    <property type="match status" value="1"/>
</dbReference>
<dbReference type="FunFam" id="3.10.580.10:FF:000001">
    <property type="entry name" value="Putative metal transporter CNNM3 isoform 2"/>
    <property type="match status" value="1"/>
</dbReference>
<dbReference type="Gene3D" id="3.10.580.10">
    <property type="entry name" value="CBS-domain"/>
    <property type="match status" value="1"/>
</dbReference>
<dbReference type="Gene3D" id="2.60.120.10">
    <property type="entry name" value="Jelly Rolls"/>
    <property type="match status" value="1"/>
</dbReference>
<dbReference type="InterPro" id="IPR045095">
    <property type="entry name" value="ACDP"/>
</dbReference>
<dbReference type="InterPro" id="IPR000644">
    <property type="entry name" value="CBS_dom"/>
</dbReference>
<dbReference type="InterPro" id="IPR046342">
    <property type="entry name" value="CBS_dom_sf"/>
</dbReference>
<dbReference type="InterPro" id="IPR002550">
    <property type="entry name" value="CNNM"/>
</dbReference>
<dbReference type="InterPro" id="IPR044751">
    <property type="entry name" value="Ion_transp-like_CBS"/>
</dbReference>
<dbReference type="InterPro" id="IPR014710">
    <property type="entry name" value="RmlC-like_jellyroll"/>
</dbReference>
<dbReference type="PANTHER" id="PTHR12064">
    <property type="entry name" value="METAL TRANSPORTER CNNM"/>
    <property type="match status" value="1"/>
</dbReference>
<dbReference type="PANTHER" id="PTHR12064:SF22">
    <property type="entry name" value="METAL TRANSPORTER CNNM2"/>
    <property type="match status" value="1"/>
</dbReference>
<dbReference type="Pfam" id="PF00571">
    <property type="entry name" value="CBS"/>
    <property type="match status" value="1"/>
</dbReference>
<dbReference type="Pfam" id="PF01595">
    <property type="entry name" value="CNNM"/>
    <property type="match status" value="1"/>
</dbReference>
<dbReference type="Pfam" id="PF25511">
    <property type="entry name" value="Ig_CNNM4_N"/>
    <property type="match status" value="1"/>
</dbReference>
<dbReference type="SUPFAM" id="SSF54631">
    <property type="entry name" value="CBS-domain pair"/>
    <property type="match status" value="1"/>
</dbReference>
<dbReference type="PROSITE" id="PS51371">
    <property type="entry name" value="CBS"/>
    <property type="match status" value="2"/>
</dbReference>
<dbReference type="PROSITE" id="PS51846">
    <property type="entry name" value="CNNM"/>
    <property type="match status" value="1"/>
</dbReference>
<sequence length="875" mass="96609">MIGCGACEPEVKMAGGQAAAALPTWKMAARRSLSARGRGVLQAAAGRLLPLLLLSCCCSAGGCTAAGENEETVIIGLRLEDTNDVSFMEGGALRVSERTRVKLRVYGQNINNETWSRIAFTEHERRRHTPGERGLGGPAPPEPDSGPQRCGIRTSDIIILPHIILNRRTSGIIEIEIKPLRKMEKSKSYYLCTSLSTPALGAGGSGSASGTVGGKGGAGVAGLPPPPWAETTWIYHDGEDTKMIVGEEKKFLLPFWLQVIFISLLLCLSGMFSGLNLGLMALDPMELRIVQNCGTEKEKNYAKRIEPVRRQGNYLLCSLLLGNVLVNTTLTILLDDIAGSGLVAVVVSTIGIVIFGEIVPQAICSRHGLAVGANTIFLTKFFMMMTFPASYPVSKLLDCVLGQEIGTVYNREKLLEMLRVTDPYNDLVKEELNIIQGALELRTKTVEDVMTPLRDCFMITGEAILDFNTMSEIMESGYTRIPVFEGERSNIVDLLFVKDLAFVDPDDCTPLKTITKFYNHPLHFVFNDTKLDAMLEEFKKGKSHLAIVQRVNNEGEGDPFYEVLGIVTLEDVIEEIIKSEILDETDLYTDNRTKKKVAHRERKQDFSAFKQTDSETKVKISPQLLLAMHRFLATEVEAFSPSQMSEKILLRLLKHPNVIQELKYDEKNKKAPECYLYQRNKPVDYFVLILQGKVEVEAGKEGMKFEASAFSYYGVMALTASPVPLSLSRTFVVSRTEVLAAGSPGENKSPPRPCGLNHSDSLSRSDRIDAMTPTLGSSNNQLSSSFLQVYIPDYSVRALSDLQFVKISRQQYQNALMASRMDKTPQSSDSENTKIELTLTEMHDGLPDETANLLNEQNCVSHNKANHSLHSEGAI</sequence>
<proteinExistence type="evidence at transcript level"/>
<feature type="chain" id="PRO_0000295762" description="Metal transporter CNNM2">
    <location>
        <begin position="1"/>
        <end position="875"/>
    </location>
</feature>
<feature type="topological domain" description="Extracellular" evidence="3">
    <location>
        <begin position="1"/>
        <end position="250"/>
    </location>
</feature>
<feature type="transmembrane region" description="Helical" evidence="3">
    <location>
        <begin position="251"/>
        <end position="271"/>
    </location>
</feature>
<feature type="topological domain" description="Cytoplasmic" evidence="3">
    <location>
        <begin position="272"/>
        <end position="313"/>
    </location>
</feature>
<feature type="intramembrane region" description="Helical" evidence="3">
    <location>
        <begin position="314"/>
        <end position="334"/>
    </location>
</feature>
<feature type="topological domain" description="Cytoplasmic" evidence="3">
    <location>
        <begin position="335"/>
        <end position="338"/>
    </location>
</feature>
<feature type="transmembrane region" description="Helical" evidence="3">
    <location>
        <begin position="339"/>
        <end position="359"/>
    </location>
</feature>
<feature type="topological domain" description="Extracellular" evidence="3">
    <location>
        <begin position="360"/>
        <end position="368"/>
    </location>
</feature>
<feature type="transmembrane region" description="Helical" evidence="3">
    <location>
        <begin position="369"/>
        <end position="389"/>
    </location>
</feature>
<feature type="topological domain" description="Cytoplasmic" evidence="3">
    <location>
        <begin position="390"/>
        <end position="875"/>
    </location>
</feature>
<feature type="domain" description="CNNM transmembrane" evidence="5">
    <location>
        <begin position="251"/>
        <end position="431"/>
    </location>
</feature>
<feature type="domain" description="CBS 1" evidence="4">
    <location>
        <begin position="450"/>
        <end position="511"/>
    </location>
</feature>
<feature type="domain" description="CBS 2" evidence="4">
    <location>
        <begin position="518"/>
        <end position="584"/>
    </location>
</feature>
<feature type="region of interest" description="Disordered" evidence="6">
    <location>
        <begin position="122"/>
        <end position="148"/>
    </location>
</feature>
<feature type="region of interest" description="Disordered" evidence="6">
    <location>
        <begin position="741"/>
        <end position="763"/>
    </location>
</feature>
<feature type="modified residue" description="Phosphoserine" evidence="2">
    <location>
        <position position="761"/>
    </location>
</feature>
<feature type="glycosylation site" description="N-linked (GlcNAc...) asparagine" evidence="3">
    <location>
        <position position="112"/>
    </location>
</feature>
<gene>
    <name type="primary">Cnnm2</name>
    <name type="synonym">Acdp2</name>
</gene>
<comment type="function">
    <text>Divalent metal cation transporter. Mediates transport of divalent metal cations in an order of Mg(2+) &gt; Co(2+) &gt; Mn(2+) &gt; Sr(2+) &gt; Ba(2+) &gt; Cu(2+) &gt; Fe(2+).</text>
</comment>
<comment type="subcellular location">
    <subcellularLocation>
        <location evidence="1">Cell membrane</location>
        <topology evidence="1">Multi-pass membrane protein</topology>
    </subcellularLocation>
</comment>
<comment type="miscellaneous">
    <text>Shares weak sequence similarity with the cyclin family, hence its name. However, it has no cyclin-like function in vivo.</text>
</comment>
<comment type="similarity">
    <text evidence="7">Belongs to the ACDP family.</text>
</comment>
<name>CNNM2_RAT</name>
<evidence type="ECO:0000250" key="1"/>
<evidence type="ECO:0000250" key="2">
    <source>
        <dbReference type="UniProtKB" id="Q9H8M5"/>
    </source>
</evidence>
<evidence type="ECO:0000255" key="3"/>
<evidence type="ECO:0000255" key="4">
    <source>
        <dbReference type="PROSITE-ProRule" id="PRU00703"/>
    </source>
</evidence>
<evidence type="ECO:0000255" key="5">
    <source>
        <dbReference type="PROSITE-ProRule" id="PRU01193"/>
    </source>
</evidence>
<evidence type="ECO:0000256" key="6">
    <source>
        <dbReference type="SAM" id="MobiDB-lite"/>
    </source>
</evidence>
<evidence type="ECO:0000305" key="7"/>
<accession>Q5U2P1</accession>